<organism>
    <name type="scientific">Arbacia punctulata</name>
    <name type="common">Punctuate sea urchin</name>
    <dbReference type="NCBI Taxonomy" id="7641"/>
    <lineage>
        <taxon>Eukaryota</taxon>
        <taxon>Metazoa</taxon>
        <taxon>Echinodermata</taxon>
        <taxon>Eleutherozoa</taxon>
        <taxon>Echinozoa</taxon>
        <taxon>Echinoidea</taxon>
        <taxon>Euechinoidea</taxon>
        <taxon>Echinacea</taxon>
        <taxon>Arbacioida</taxon>
        <taxon>Arbaciidae</taxon>
        <taxon>Arbacia</taxon>
    </lineage>
</organism>
<comment type="function">
    <text>Calmodulin mediates the control of a large number of enzymes, ion channels and other proteins by Ca(2+). Among the enzymes to be stimulated by the calmodulin-Ca(2+) complex are a number of protein kinases and phosphatases.</text>
</comment>
<comment type="miscellaneous">
    <text>This protein has four functional calcium-binding sites.</text>
</comment>
<comment type="miscellaneous">
    <text>Arbacia punctulata has two distinct calmodulins isotypes: alpha and beta.</text>
</comment>
<comment type="similarity">
    <text evidence="3">Belongs to the calmodulin family.</text>
</comment>
<reference key="1">
    <citation type="journal article" date="1988" name="J. Mol. Biol.">
        <title>Two calmodulin genes are expressed in Arbacia punctulata. An ancient gene duplication is indicated.</title>
        <authorList>
            <person name="Hardy D.O."/>
            <person name="Bender P.K."/>
            <person name="Kretsinger R.H."/>
        </authorList>
    </citation>
    <scope>NUCLEOTIDE SEQUENCE [MRNA]</scope>
</reference>
<protein>
    <recommendedName>
        <fullName>Calmodulin-alpha</fullName>
        <shortName>CaM A</shortName>
    </recommendedName>
</protein>
<accession>P62146</accession>
<accession>P02593</accession>
<accession>P70667</accession>
<accession>P99014</accession>
<accession>Q61379</accession>
<accession>Q61380</accession>
<proteinExistence type="evidence at protein level"/>
<feature type="initiator methionine" description="Removed" evidence="1">
    <location>
        <position position="1"/>
    </location>
</feature>
<feature type="chain" id="PRO_0000198244" description="Calmodulin-alpha">
    <location>
        <begin position="2"/>
        <end position="142" status="greater than"/>
    </location>
</feature>
<feature type="domain" description="EF-hand 1" evidence="2">
    <location>
        <begin position="8"/>
        <end position="43"/>
    </location>
</feature>
<feature type="domain" description="EF-hand 2" evidence="2">
    <location>
        <begin position="44"/>
        <end position="79"/>
    </location>
</feature>
<feature type="domain" description="EF-hand 3" evidence="2">
    <location>
        <begin position="81"/>
        <end position="116"/>
    </location>
</feature>
<feature type="domain" description="EF-hand 4" evidence="2">
    <location>
        <begin position="117"/>
        <end position="142" status="greater than"/>
    </location>
</feature>
<feature type="binding site" evidence="2">
    <location>
        <position position="21"/>
    </location>
    <ligand>
        <name>Ca(2+)</name>
        <dbReference type="ChEBI" id="CHEBI:29108"/>
        <label>1</label>
    </ligand>
</feature>
<feature type="binding site" evidence="2">
    <location>
        <position position="23"/>
    </location>
    <ligand>
        <name>Ca(2+)</name>
        <dbReference type="ChEBI" id="CHEBI:29108"/>
        <label>1</label>
    </ligand>
</feature>
<feature type="binding site" evidence="2">
    <location>
        <position position="25"/>
    </location>
    <ligand>
        <name>Ca(2+)</name>
        <dbReference type="ChEBI" id="CHEBI:29108"/>
        <label>1</label>
    </ligand>
</feature>
<feature type="binding site" evidence="2">
    <location>
        <position position="27"/>
    </location>
    <ligand>
        <name>Ca(2+)</name>
        <dbReference type="ChEBI" id="CHEBI:29108"/>
        <label>1</label>
    </ligand>
</feature>
<feature type="binding site" evidence="2">
    <location>
        <position position="32"/>
    </location>
    <ligand>
        <name>Ca(2+)</name>
        <dbReference type="ChEBI" id="CHEBI:29108"/>
        <label>1</label>
    </ligand>
</feature>
<feature type="binding site" evidence="2">
    <location>
        <position position="57"/>
    </location>
    <ligand>
        <name>Ca(2+)</name>
        <dbReference type="ChEBI" id="CHEBI:29108"/>
        <label>2</label>
    </ligand>
</feature>
<feature type="binding site" evidence="2">
    <location>
        <position position="59"/>
    </location>
    <ligand>
        <name>Ca(2+)</name>
        <dbReference type="ChEBI" id="CHEBI:29108"/>
        <label>2</label>
    </ligand>
</feature>
<feature type="binding site" evidence="2">
    <location>
        <position position="61"/>
    </location>
    <ligand>
        <name>Ca(2+)</name>
        <dbReference type="ChEBI" id="CHEBI:29108"/>
        <label>2</label>
    </ligand>
</feature>
<feature type="binding site" evidence="2">
    <location>
        <position position="63"/>
    </location>
    <ligand>
        <name>Ca(2+)</name>
        <dbReference type="ChEBI" id="CHEBI:29108"/>
        <label>2</label>
    </ligand>
</feature>
<feature type="binding site" evidence="2">
    <location>
        <position position="68"/>
    </location>
    <ligand>
        <name>Ca(2+)</name>
        <dbReference type="ChEBI" id="CHEBI:29108"/>
        <label>2</label>
    </ligand>
</feature>
<feature type="binding site" evidence="2">
    <location>
        <position position="94"/>
    </location>
    <ligand>
        <name>Ca(2+)</name>
        <dbReference type="ChEBI" id="CHEBI:29108"/>
        <label>3</label>
    </ligand>
</feature>
<feature type="binding site" evidence="2">
    <location>
        <position position="96"/>
    </location>
    <ligand>
        <name>Ca(2+)</name>
        <dbReference type="ChEBI" id="CHEBI:29108"/>
        <label>3</label>
    </ligand>
</feature>
<feature type="binding site" evidence="2">
    <location>
        <position position="98"/>
    </location>
    <ligand>
        <name>Ca(2+)</name>
        <dbReference type="ChEBI" id="CHEBI:29108"/>
        <label>3</label>
    </ligand>
</feature>
<feature type="binding site" evidence="2">
    <location>
        <position position="100"/>
    </location>
    <ligand>
        <name>Ca(2+)</name>
        <dbReference type="ChEBI" id="CHEBI:29108"/>
        <label>3</label>
    </ligand>
</feature>
<feature type="binding site" evidence="2">
    <location>
        <position position="105"/>
    </location>
    <ligand>
        <name>Ca(2+)</name>
        <dbReference type="ChEBI" id="CHEBI:29108"/>
        <label>3</label>
    </ligand>
</feature>
<feature type="binding site" evidence="2">
    <location>
        <position position="130"/>
    </location>
    <ligand>
        <name>Ca(2+)</name>
        <dbReference type="ChEBI" id="CHEBI:29108"/>
        <label>4</label>
    </ligand>
</feature>
<feature type="binding site" evidence="2">
    <location>
        <position position="132"/>
    </location>
    <ligand>
        <name>Ca(2+)</name>
        <dbReference type="ChEBI" id="CHEBI:29108"/>
        <label>4</label>
    </ligand>
</feature>
<feature type="binding site" evidence="2">
    <location>
        <position position="134"/>
    </location>
    <ligand>
        <name>Ca(2+)</name>
        <dbReference type="ChEBI" id="CHEBI:29108"/>
        <label>4</label>
    </ligand>
</feature>
<feature type="binding site" evidence="2">
    <location>
        <position position="136"/>
    </location>
    <ligand>
        <name>Ca(2+)</name>
        <dbReference type="ChEBI" id="CHEBI:29108"/>
        <label>4</label>
    </ligand>
</feature>
<feature type="binding site" evidence="2">
    <location>
        <position position="141"/>
    </location>
    <ligand>
        <name>Ca(2+)</name>
        <dbReference type="ChEBI" id="CHEBI:29108"/>
        <label>4</label>
    </ligand>
</feature>
<feature type="modified residue" description="N-acetylalanine" evidence="1">
    <location>
        <position position="2"/>
    </location>
</feature>
<feature type="modified residue" description="N6,N6,N6-trimethyllysine" evidence="1">
    <location>
        <position position="116"/>
    </location>
</feature>
<feature type="non-terminal residue">
    <location>
        <position position="142"/>
    </location>
</feature>
<feature type="helix" evidence="4">
    <location>
        <begin position="7"/>
        <end position="20"/>
    </location>
</feature>
<feature type="strand" evidence="4">
    <location>
        <begin position="25"/>
        <end position="28"/>
    </location>
</feature>
<feature type="helix" evidence="4">
    <location>
        <begin position="30"/>
        <end position="39"/>
    </location>
</feature>
<feature type="helix" evidence="4">
    <location>
        <begin position="46"/>
        <end position="56"/>
    </location>
</feature>
<feature type="strand" evidence="4">
    <location>
        <begin position="61"/>
        <end position="65"/>
    </location>
</feature>
<feature type="helix" evidence="4">
    <location>
        <begin position="66"/>
        <end position="93"/>
    </location>
</feature>
<feature type="helix" evidence="4">
    <location>
        <begin position="103"/>
        <end position="112"/>
    </location>
</feature>
<feature type="helix" evidence="4">
    <location>
        <begin position="119"/>
        <end position="129"/>
    </location>
</feature>
<feature type="strand" evidence="4">
    <location>
        <begin position="134"/>
        <end position="137"/>
    </location>
</feature>
<feature type="helix" evidence="4">
    <location>
        <begin position="139"/>
        <end position="142"/>
    </location>
</feature>
<dbReference type="PIR" id="S02690">
    <property type="entry name" value="S02690"/>
</dbReference>
<dbReference type="PDB" id="1UP5">
    <property type="method" value="X-ray"/>
    <property type="resolution" value="1.90 A"/>
    <property type="chains" value="A/B=2-142"/>
</dbReference>
<dbReference type="PDBsum" id="1UP5"/>
<dbReference type="SMR" id="P62146"/>
<dbReference type="GO" id="GO:0016460">
    <property type="term" value="C:myosin II complex"/>
    <property type="evidence" value="ECO:0007669"/>
    <property type="project" value="TreeGrafter"/>
</dbReference>
<dbReference type="GO" id="GO:0005509">
    <property type="term" value="F:calcium ion binding"/>
    <property type="evidence" value="ECO:0007669"/>
    <property type="project" value="InterPro"/>
</dbReference>
<dbReference type="CDD" id="cd00051">
    <property type="entry name" value="EFh"/>
    <property type="match status" value="2"/>
</dbReference>
<dbReference type="FunFam" id="1.10.238.10:FF:000527">
    <property type="entry name" value="Calmodulin-3"/>
    <property type="match status" value="1"/>
</dbReference>
<dbReference type="Gene3D" id="1.10.238.10">
    <property type="entry name" value="EF-hand"/>
    <property type="match status" value="2"/>
</dbReference>
<dbReference type="InterPro" id="IPR050230">
    <property type="entry name" value="CALM/Myosin/TropC-like"/>
</dbReference>
<dbReference type="InterPro" id="IPR011992">
    <property type="entry name" value="EF-hand-dom_pair"/>
</dbReference>
<dbReference type="InterPro" id="IPR018247">
    <property type="entry name" value="EF_Hand_1_Ca_BS"/>
</dbReference>
<dbReference type="InterPro" id="IPR002048">
    <property type="entry name" value="EF_hand_dom"/>
</dbReference>
<dbReference type="PANTHER" id="PTHR23048:SF0">
    <property type="entry name" value="CALMODULIN LIKE 3"/>
    <property type="match status" value="1"/>
</dbReference>
<dbReference type="PANTHER" id="PTHR23048">
    <property type="entry name" value="MYOSIN LIGHT CHAIN 1, 3"/>
    <property type="match status" value="1"/>
</dbReference>
<dbReference type="Pfam" id="PF13499">
    <property type="entry name" value="EF-hand_7"/>
    <property type="match status" value="2"/>
</dbReference>
<dbReference type="PRINTS" id="PR00450">
    <property type="entry name" value="RECOVERIN"/>
</dbReference>
<dbReference type="SMART" id="SM00054">
    <property type="entry name" value="EFh"/>
    <property type="match status" value="4"/>
</dbReference>
<dbReference type="SUPFAM" id="SSF47473">
    <property type="entry name" value="EF-hand"/>
    <property type="match status" value="1"/>
</dbReference>
<dbReference type="PROSITE" id="PS00018">
    <property type="entry name" value="EF_HAND_1"/>
    <property type="match status" value="4"/>
</dbReference>
<dbReference type="PROSITE" id="PS50222">
    <property type="entry name" value="EF_HAND_2"/>
    <property type="match status" value="4"/>
</dbReference>
<sequence>MADQLTEEQIAEFKEAFSLFDKDGDGTITTKELGTVMRSLGQNPTEAELQDMINEVDADGNGTIDFPEFLTMMARKMKDTDSEEEIREAFRVFDKDGNGYISAAELRHVMTNLGEKLTDEEVDEMIREADIDGDGQVNYEEF</sequence>
<keyword id="KW-0002">3D-structure</keyword>
<keyword id="KW-0007">Acetylation</keyword>
<keyword id="KW-0106">Calcium</keyword>
<keyword id="KW-0479">Metal-binding</keyword>
<keyword id="KW-0488">Methylation</keyword>
<keyword id="KW-0677">Repeat</keyword>
<name>CALMA_ARBPU</name>
<evidence type="ECO:0000250" key="1"/>
<evidence type="ECO:0000255" key="2">
    <source>
        <dbReference type="PROSITE-ProRule" id="PRU00448"/>
    </source>
</evidence>
<evidence type="ECO:0000305" key="3"/>
<evidence type="ECO:0007829" key="4">
    <source>
        <dbReference type="PDB" id="1UP5"/>
    </source>
</evidence>